<gene>
    <name type="primary">rpmH</name>
    <name type="ordered locus">NMB1904</name>
</gene>
<name>RL34_NEIMB</name>
<accession>P66251</accession>
<accession>Q9JRA1</accession>
<reference key="1">
    <citation type="journal article" date="2000" name="Science">
        <title>Complete genome sequence of Neisseria meningitidis serogroup B strain MC58.</title>
        <authorList>
            <person name="Tettelin H."/>
            <person name="Saunders N.J."/>
            <person name="Heidelberg J.F."/>
            <person name="Jeffries A.C."/>
            <person name="Nelson K.E."/>
            <person name="Eisen J.A."/>
            <person name="Ketchum K.A."/>
            <person name="Hood D.W."/>
            <person name="Peden J.F."/>
            <person name="Dodson R.J."/>
            <person name="Nelson W.C."/>
            <person name="Gwinn M.L."/>
            <person name="DeBoy R.T."/>
            <person name="Peterson J.D."/>
            <person name="Hickey E.K."/>
            <person name="Haft D.H."/>
            <person name="Salzberg S.L."/>
            <person name="White O."/>
            <person name="Fleischmann R.D."/>
            <person name="Dougherty B.A."/>
            <person name="Mason T.M."/>
            <person name="Ciecko A."/>
            <person name="Parksey D.S."/>
            <person name="Blair E."/>
            <person name="Cittone H."/>
            <person name="Clark E.B."/>
            <person name="Cotton M.D."/>
            <person name="Utterback T.R."/>
            <person name="Khouri H.M."/>
            <person name="Qin H."/>
            <person name="Vamathevan J.J."/>
            <person name="Gill J."/>
            <person name="Scarlato V."/>
            <person name="Masignani V."/>
            <person name="Pizza M."/>
            <person name="Grandi G."/>
            <person name="Sun L."/>
            <person name="Smith H.O."/>
            <person name="Fraser C.M."/>
            <person name="Moxon E.R."/>
            <person name="Rappuoli R."/>
            <person name="Venter J.C."/>
        </authorList>
    </citation>
    <scope>NUCLEOTIDE SEQUENCE [LARGE SCALE GENOMIC DNA]</scope>
    <source>
        <strain>ATCC BAA-335 / MC58</strain>
    </source>
</reference>
<keyword id="KW-1185">Reference proteome</keyword>
<keyword id="KW-0687">Ribonucleoprotein</keyword>
<keyword id="KW-0689">Ribosomal protein</keyword>
<comment type="similarity">
    <text evidence="2">Belongs to the bacterial ribosomal protein bL34 family.</text>
</comment>
<organism>
    <name type="scientific">Neisseria meningitidis serogroup B (strain ATCC BAA-335 / MC58)</name>
    <dbReference type="NCBI Taxonomy" id="122586"/>
    <lineage>
        <taxon>Bacteria</taxon>
        <taxon>Pseudomonadati</taxon>
        <taxon>Pseudomonadota</taxon>
        <taxon>Betaproteobacteria</taxon>
        <taxon>Neisseriales</taxon>
        <taxon>Neisseriaceae</taxon>
        <taxon>Neisseria</taxon>
    </lineage>
</organism>
<feature type="chain" id="PRO_0000187427" description="Large ribosomal subunit protein bL34">
    <location>
        <begin position="1"/>
        <end position="44"/>
    </location>
</feature>
<feature type="region of interest" description="Disordered" evidence="1">
    <location>
        <begin position="24"/>
        <end position="44"/>
    </location>
</feature>
<feature type="compositionally biased region" description="Basic residues" evidence="1">
    <location>
        <begin position="34"/>
        <end position="44"/>
    </location>
</feature>
<sequence length="44" mass="5051">MKRTYQPSVTKRKRTHGFLVRSKTRGGRAVLAARRAKGRKRLAV</sequence>
<dbReference type="EMBL" id="AE002098">
    <property type="protein sequence ID" value="AAF42234.1"/>
    <property type="molecule type" value="Genomic_DNA"/>
</dbReference>
<dbReference type="PIR" id="G81027">
    <property type="entry name" value="G81027"/>
</dbReference>
<dbReference type="RefSeq" id="NP_274898.1">
    <property type="nucleotide sequence ID" value="NC_003112.2"/>
</dbReference>
<dbReference type="RefSeq" id="WP_002214728.1">
    <property type="nucleotide sequence ID" value="NC_003112.2"/>
</dbReference>
<dbReference type="SMR" id="P66251"/>
<dbReference type="FunCoup" id="P66251">
    <property type="interactions" value="370"/>
</dbReference>
<dbReference type="STRING" id="122586.NMB1904"/>
<dbReference type="PaxDb" id="122586-NMB1904"/>
<dbReference type="GeneID" id="94582113"/>
<dbReference type="KEGG" id="nme:NMB1904"/>
<dbReference type="PATRIC" id="fig|122586.8.peg.2430"/>
<dbReference type="HOGENOM" id="CLU_129938_2_0_4"/>
<dbReference type="InParanoid" id="P66251"/>
<dbReference type="PRO" id="PR:P66251"/>
<dbReference type="Proteomes" id="UP000000425">
    <property type="component" value="Chromosome"/>
</dbReference>
<dbReference type="GO" id="GO:1990904">
    <property type="term" value="C:ribonucleoprotein complex"/>
    <property type="evidence" value="ECO:0007669"/>
    <property type="project" value="UniProtKB-KW"/>
</dbReference>
<dbReference type="GO" id="GO:0005840">
    <property type="term" value="C:ribosome"/>
    <property type="evidence" value="ECO:0007669"/>
    <property type="project" value="UniProtKB-KW"/>
</dbReference>
<dbReference type="GO" id="GO:0003735">
    <property type="term" value="F:structural constituent of ribosome"/>
    <property type="evidence" value="ECO:0007669"/>
    <property type="project" value="InterPro"/>
</dbReference>
<dbReference type="GO" id="GO:0006412">
    <property type="term" value="P:translation"/>
    <property type="evidence" value="ECO:0007669"/>
    <property type="project" value="UniProtKB-UniRule"/>
</dbReference>
<dbReference type="FunFam" id="1.10.287.3980:FF:000001">
    <property type="entry name" value="Mitochondrial ribosomal protein L34"/>
    <property type="match status" value="1"/>
</dbReference>
<dbReference type="Gene3D" id="1.10.287.3980">
    <property type="match status" value="1"/>
</dbReference>
<dbReference type="HAMAP" id="MF_00391">
    <property type="entry name" value="Ribosomal_bL34"/>
    <property type="match status" value="1"/>
</dbReference>
<dbReference type="InterPro" id="IPR000271">
    <property type="entry name" value="Ribosomal_bL34"/>
</dbReference>
<dbReference type="InterPro" id="IPR020939">
    <property type="entry name" value="Ribosomal_bL34_CS"/>
</dbReference>
<dbReference type="NCBIfam" id="TIGR01030">
    <property type="entry name" value="rpmH_bact"/>
    <property type="match status" value="1"/>
</dbReference>
<dbReference type="PANTHER" id="PTHR14503:SF4">
    <property type="entry name" value="LARGE RIBOSOMAL SUBUNIT PROTEIN BL34M"/>
    <property type="match status" value="1"/>
</dbReference>
<dbReference type="PANTHER" id="PTHR14503">
    <property type="entry name" value="MITOCHONDRIAL RIBOSOMAL PROTEIN 34 FAMILY MEMBER"/>
    <property type="match status" value="1"/>
</dbReference>
<dbReference type="Pfam" id="PF00468">
    <property type="entry name" value="Ribosomal_L34"/>
    <property type="match status" value="1"/>
</dbReference>
<dbReference type="PROSITE" id="PS00784">
    <property type="entry name" value="RIBOSOMAL_L34"/>
    <property type="match status" value="1"/>
</dbReference>
<evidence type="ECO:0000256" key="1">
    <source>
        <dbReference type="SAM" id="MobiDB-lite"/>
    </source>
</evidence>
<evidence type="ECO:0000305" key="2"/>
<protein>
    <recommendedName>
        <fullName evidence="2">Large ribosomal subunit protein bL34</fullName>
    </recommendedName>
    <alternativeName>
        <fullName>50S ribosomal protein L34</fullName>
    </alternativeName>
</protein>
<proteinExistence type="inferred from homology"/>